<feature type="chain" id="PRO_1000197343" description="Spermidine export protein MdtJ">
    <location>
        <begin position="1"/>
        <end position="147"/>
    </location>
</feature>
<feature type="transmembrane region" description="Helical" evidence="1">
    <location>
        <begin position="1"/>
        <end position="21"/>
    </location>
</feature>
<feature type="transmembrane region" description="Helical" evidence="1">
    <location>
        <begin position="31"/>
        <end position="51"/>
    </location>
</feature>
<feature type="transmembrane region" description="Helical" evidence="1">
    <location>
        <begin position="54"/>
        <end position="74"/>
    </location>
</feature>
<feature type="transmembrane region" description="Helical" evidence="1">
    <location>
        <begin position="81"/>
        <end position="101"/>
    </location>
</feature>
<feature type="region of interest" description="Disordered" evidence="2">
    <location>
        <begin position="105"/>
        <end position="147"/>
    </location>
</feature>
<protein>
    <recommendedName>
        <fullName evidence="1">Spermidine export protein MdtJ</fullName>
    </recommendedName>
</protein>
<reference key="1">
    <citation type="journal article" date="2010" name="J. Bacteriol.">
        <title>Genome sequence of the deep-rooted Yersinia pestis strain Angola reveals new insights into the evolution and pangenome of the plague bacterium.</title>
        <authorList>
            <person name="Eppinger M."/>
            <person name="Worsham P.L."/>
            <person name="Nikolich M.P."/>
            <person name="Riley D.R."/>
            <person name="Sebastian Y."/>
            <person name="Mou S."/>
            <person name="Achtman M."/>
            <person name="Lindler L.E."/>
            <person name="Ravel J."/>
        </authorList>
    </citation>
    <scope>NUCLEOTIDE SEQUENCE [LARGE SCALE GENOMIC DNA]</scope>
    <source>
        <strain>Angola</strain>
    </source>
</reference>
<sequence length="147" mass="15852">MIYWIFLGLAIIAEIIGTLSMKYASVSGEMTGHIVMYFMITGSYVMLSLAVKKVALGVAYALWEGIGILIITIFSVMWFGETLSPLKIAGLVTLIGGILLVKSGTRKPKQPNCHRGNRPPSVQELKTQTTGHHKGVAVESGEHHAAA</sequence>
<keyword id="KW-0997">Cell inner membrane</keyword>
<keyword id="KW-1003">Cell membrane</keyword>
<keyword id="KW-0472">Membrane</keyword>
<keyword id="KW-0812">Transmembrane</keyword>
<keyword id="KW-1133">Transmembrane helix</keyword>
<keyword id="KW-0813">Transport</keyword>
<organism>
    <name type="scientific">Yersinia pestis bv. Antiqua (strain Angola)</name>
    <dbReference type="NCBI Taxonomy" id="349746"/>
    <lineage>
        <taxon>Bacteria</taxon>
        <taxon>Pseudomonadati</taxon>
        <taxon>Pseudomonadota</taxon>
        <taxon>Gammaproteobacteria</taxon>
        <taxon>Enterobacterales</taxon>
        <taxon>Yersiniaceae</taxon>
        <taxon>Yersinia</taxon>
    </lineage>
</organism>
<dbReference type="EMBL" id="CP000901">
    <property type="protein sequence ID" value="ABX86248.1"/>
    <property type="molecule type" value="Genomic_DNA"/>
</dbReference>
<dbReference type="RefSeq" id="WP_002211188.1">
    <property type="nucleotide sequence ID" value="NZ_CP009935.1"/>
</dbReference>
<dbReference type="SMR" id="A9QYW2"/>
<dbReference type="GeneID" id="57976593"/>
<dbReference type="KEGG" id="ypg:YpAngola_A2409"/>
<dbReference type="PATRIC" id="fig|349746.12.peg.3425"/>
<dbReference type="GO" id="GO:0005886">
    <property type="term" value="C:plasma membrane"/>
    <property type="evidence" value="ECO:0007669"/>
    <property type="project" value="UniProtKB-SubCell"/>
</dbReference>
<dbReference type="GO" id="GO:0015199">
    <property type="term" value="F:amino-acid betaine transmembrane transporter activity"/>
    <property type="evidence" value="ECO:0007669"/>
    <property type="project" value="TreeGrafter"/>
</dbReference>
<dbReference type="GO" id="GO:0015297">
    <property type="term" value="F:antiporter activity"/>
    <property type="evidence" value="ECO:0007669"/>
    <property type="project" value="TreeGrafter"/>
</dbReference>
<dbReference type="GO" id="GO:0015220">
    <property type="term" value="F:choline transmembrane transporter activity"/>
    <property type="evidence" value="ECO:0007669"/>
    <property type="project" value="TreeGrafter"/>
</dbReference>
<dbReference type="GO" id="GO:0015606">
    <property type="term" value="F:spermidine transmembrane transporter activity"/>
    <property type="evidence" value="ECO:0007669"/>
    <property type="project" value="UniProtKB-UniRule"/>
</dbReference>
<dbReference type="GO" id="GO:0031460">
    <property type="term" value="P:glycine betaine transport"/>
    <property type="evidence" value="ECO:0007669"/>
    <property type="project" value="TreeGrafter"/>
</dbReference>
<dbReference type="FunFam" id="1.10.3730.20:FF:000001">
    <property type="entry name" value="Quaternary ammonium compound resistance transporter SugE"/>
    <property type="match status" value="1"/>
</dbReference>
<dbReference type="Gene3D" id="1.10.3730.20">
    <property type="match status" value="1"/>
</dbReference>
<dbReference type="HAMAP" id="MF_01598">
    <property type="entry name" value="MdtJ"/>
    <property type="match status" value="1"/>
</dbReference>
<dbReference type="InterPro" id="IPR000390">
    <property type="entry name" value="Small_drug/metabolite_transptr"/>
</dbReference>
<dbReference type="InterPro" id="IPR045324">
    <property type="entry name" value="Small_multidrug_res"/>
</dbReference>
<dbReference type="InterPro" id="IPR023740">
    <property type="entry name" value="Spermidine_export_MdtJ"/>
</dbReference>
<dbReference type="NCBIfam" id="NF007767">
    <property type="entry name" value="PRK10452.1"/>
    <property type="match status" value="1"/>
</dbReference>
<dbReference type="PANTHER" id="PTHR30561">
    <property type="entry name" value="SMR FAMILY PROTON-DEPENDENT DRUG EFFLUX TRANSPORTER SUGE"/>
    <property type="match status" value="1"/>
</dbReference>
<dbReference type="PANTHER" id="PTHR30561:SF2">
    <property type="entry name" value="SPERMIDINE EXPORT PROTEIN MDTJ"/>
    <property type="match status" value="1"/>
</dbReference>
<dbReference type="Pfam" id="PF00893">
    <property type="entry name" value="Multi_Drug_Res"/>
    <property type="match status" value="1"/>
</dbReference>
<dbReference type="SUPFAM" id="SSF103481">
    <property type="entry name" value="Multidrug resistance efflux transporter EmrE"/>
    <property type="match status" value="1"/>
</dbReference>
<accession>A9QYW2</accession>
<comment type="function">
    <text evidence="1">Catalyzes the excretion of spermidine.</text>
</comment>
<comment type="subunit">
    <text evidence="1">Forms a complex with MdtI.</text>
</comment>
<comment type="subcellular location">
    <subcellularLocation>
        <location evidence="1">Cell inner membrane</location>
        <topology evidence="1">Multi-pass membrane protein</topology>
    </subcellularLocation>
</comment>
<comment type="similarity">
    <text evidence="1">Belongs to the drug/metabolite transporter (DMT) superfamily. Small multidrug resistance (SMR) (TC 2.A.7.1) family. MdtJ subfamily.</text>
</comment>
<proteinExistence type="inferred from homology"/>
<evidence type="ECO:0000255" key="1">
    <source>
        <dbReference type="HAMAP-Rule" id="MF_01598"/>
    </source>
</evidence>
<evidence type="ECO:0000256" key="2">
    <source>
        <dbReference type="SAM" id="MobiDB-lite"/>
    </source>
</evidence>
<gene>
    <name evidence="1" type="primary">mdtJ</name>
    <name type="ordered locus">YpAngola_A2409</name>
</gene>
<name>MDTJ_YERPG</name>